<keyword id="KW-0030">Aminoacyl-tRNA synthetase</keyword>
<keyword id="KW-0067">ATP-binding</keyword>
<keyword id="KW-0963">Cytoplasm</keyword>
<keyword id="KW-0436">Ligase</keyword>
<keyword id="KW-0547">Nucleotide-binding</keyword>
<keyword id="KW-0648">Protein biosynthesis</keyword>
<keyword id="KW-1185">Reference proteome</keyword>
<accession>Q9PQC6</accession>
<proteinExistence type="inferred from homology"/>
<organism>
    <name type="scientific">Ureaplasma parvum serovar 3 (strain ATCC 700970)</name>
    <dbReference type="NCBI Taxonomy" id="273119"/>
    <lineage>
        <taxon>Bacteria</taxon>
        <taxon>Bacillati</taxon>
        <taxon>Mycoplasmatota</taxon>
        <taxon>Mycoplasmoidales</taxon>
        <taxon>Mycoplasmoidaceae</taxon>
        <taxon>Ureaplasma</taxon>
    </lineage>
</organism>
<protein>
    <recommendedName>
        <fullName evidence="1">Asparagine--tRNA ligase</fullName>
        <ecNumber evidence="1">6.1.1.22</ecNumber>
    </recommendedName>
    <alternativeName>
        <fullName evidence="1">Asparaginyl-tRNA synthetase</fullName>
        <shortName evidence="1">AsnRS</shortName>
    </alternativeName>
</protein>
<reference key="1">
    <citation type="journal article" date="2000" name="Nature">
        <title>The complete sequence of the mucosal pathogen Ureaplasma urealyticum.</title>
        <authorList>
            <person name="Glass J.I."/>
            <person name="Lefkowitz E.J."/>
            <person name="Glass J.S."/>
            <person name="Heiner C.R."/>
            <person name="Chen E.Y."/>
            <person name="Cassell G.H."/>
        </authorList>
    </citation>
    <scope>NUCLEOTIDE SEQUENCE [LARGE SCALE GENOMIC DNA]</scope>
    <source>
        <strain>ATCC 700970</strain>
    </source>
</reference>
<feature type="chain" id="PRO_0000176473" description="Asparagine--tRNA ligase">
    <location>
        <begin position="1"/>
        <end position="454"/>
    </location>
</feature>
<name>SYN_UREPA</name>
<gene>
    <name evidence="1" type="primary">asnS</name>
    <name type="ordered locus">UU365</name>
</gene>
<sequence>MQLKIKEIFNQDYVKLEGQKIQIKAWVRSNRDSKKIGFLVLNDGSSLTNLQAVYRVDKIDNYEEIAAARMWAAVVIEGVIKLTPTAKQPLELEVLNAQILKQSDEDFLLSNNDLNLETLRLNAHLRPRTNLFHAIMKVRATLAFAVHEFMNQNEYSWLAAPLFTGNDAEGAGETFSIQKFDNEEFFGKQTHLSVTGQLQAEAYAQAFGNVYTFGPTFRAEKSHTNRHLAEFWMIEPEMAFVDLKGMQDIVEDLVKHVIKAVLEKNQQELEFLAQRNDENLIKKLQKVVESKFERIEYKDAVKILADAVKNGHQFENNEIFFGMDLGSEHERYMCETYHQGPVFLQNYPKDIKAFYMKLNDDQQTVASTDLLIPGVGELVGGSQREDSYEKLLKRCQELKMPIESLQWYLDLRRFGYYMSSGFGIGFERLVMYVTGVNNIKDTIPFPRSHGQIEF</sequence>
<comment type="catalytic activity">
    <reaction evidence="1">
        <text>tRNA(Asn) + L-asparagine + ATP = L-asparaginyl-tRNA(Asn) + AMP + diphosphate + H(+)</text>
        <dbReference type="Rhea" id="RHEA:11180"/>
        <dbReference type="Rhea" id="RHEA-COMP:9659"/>
        <dbReference type="Rhea" id="RHEA-COMP:9674"/>
        <dbReference type="ChEBI" id="CHEBI:15378"/>
        <dbReference type="ChEBI" id="CHEBI:30616"/>
        <dbReference type="ChEBI" id="CHEBI:33019"/>
        <dbReference type="ChEBI" id="CHEBI:58048"/>
        <dbReference type="ChEBI" id="CHEBI:78442"/>
        <dbReference type="ChEBI" id="CHEBI:78515"/>
        <dbReference type="ChEBI" id="CHEBI:456215"/>
        <dbReference type="EC" id="6.1.1.22"/>
    </reaction>
</comment>
<comment type="subunit">
    <text evidence="1">Homodimer.</text>
</comment>
<comment type="subcellular location">
    <subcellularLocation>
        <location evidence="1">Cytoplasm</location>
    </subcellularLocation>
</comment>
<comment type="similarity">
    <text evidence="1">Belongs to the class-II aminoacyl-tRNA synthetase family.</text>
</comment>
<evidence type="ECO:0000255" key="1">
    <source>
        <dbReference type="HAMAP-Rule" id="MF_00534"/>
    </source>
</evidence>
<dbReference type="EC" id="6.1.1.22" evidence="1"/>
<dbReference type="EMBL" id="AF222894">
    <property type="protein sequence ID" value="AAF30774.1"/>
    <property type="molecule type" value="Genomic_DNA"/>
</dbReference>
<dbReference type="RefSeq" id="WP_006688779.1">
    <property type="nucleotide sequence ID" value="NC_002162.1"/>
</dbReference>
<dbReference type="SMR" id="Q9PQC6"/>
<dbReference type="STRING" id="273119.UU365"/>
<dbReference type="EnsemblBacteria" id="AAF30774">
    <property type="protein sequence ID" value="AAF30774"/>
    <property type="gene ID" value="UU365"/>
</dbReference>
<dbReference type="GeneID" id="29672210"/>
<dbReference type="KEGG" id="uur:UU365"/>
<dbReference type="eggNOG" id="COG0017">
    <property type="taxonomic scope" value="Bacteria"/>
</dbReference>
<dbReference type="HOGENOM" id="CLU_004553_2_0_14"/>
<dbReference type="OrthoDB" id="9762036at2"/>
<dbReference type="Proteomes" id="UP000000423">
    <property type="component" value="Chromosome"/>
</dbReference>
<dbReference type="GO" id="GO:0005737">
    <property type="term" value="C:cytoplasm"/>
    <property type="evidence" value="ECO:0007669"/>
    <property type="project" value="UniProtKB-SubCell"/>
</dbReference>
<dbReference type="GO" id="GO:0004816">
    <property type="term" value="F:asparagine-tRNA ligase activity"/>
    <property type="evidence" value="ECO:0007669"/>
    <property type="project" value="UniProtKB-UniRule"/>
</dbReference>
<dbReference type="GO" id="GO:0005524">
    <property type="term" value="F:ATP binding"/>
    <property type="evidence" value="ECO:0007669"/>
    <property type="project" value="UniProtKB-UniRule"/>
</dbReference>
<dbReference type="GO" id="GO:0003676">
    <property type="term" value="F:nucleic acid binding"/>
    <property type="evidence" value="ECO:0007669"/>
    <property type="project" value="InterPro"/>
</dbReference>
<dbReference type="GO" id="GO:0006421">
    <property type="term" value="P:asparaginyl-tRNA aminoacylation"/>
    <property type="evidence" value="ECO:0007669"/>
    <property type="project" value="UniProtKB-UniRule"/>
</dbReference>
<dbReference type="CDD" id="cd00776">
    <property type="entry name" value="AsxRS_core"/>
    <property type="match status" value="1"/>
</dbReference>
<dbReference type="CDD" id="cd04318">
    <property type="entry name" value="EcAsnRS_like_N"/>
    <property type="match status" value="1"/>
</dbReference>
<dbReference type="FunFam" id="3.30.930.10:FF:000016">
    <property type="entry name" value="Asparagine--tRNA ligase"/>
    <property type="match status" value="1"/>
</dbReference>
<dbReference type="Gene3D" id="3.30.930.10">
    <property type="entry name" value="Bira Bifunctional Protein, Domain 2"/>
    <property type="match status" value="1"/>
</dbReference>
<dbReference type="Gene3D" id="2.40.50.140">
    <property type="entry name" value="Nucleic acid-binding proteins"/>
    <property type="match status" value="1"/>
</dbReference>
<dbReference type="HAMAP" id="MF_00534">
    <property type="entry name" value="Asn_tRNA_synth"/>
    <property type="match status" value="1"/>
</dbReference>
<dbReference type="InterPro" id="IPR004364">
    <property type="entry name" value="Aa-tRNA-synt_II"/>
</dbReference>
<dbReference type="InterPro" id="IPR006195">
    <property type="entry name" value="aa-tRNA-synth_II"/>
</dbReference>
<dbReference type="InterPro" id="IPR045864">
    <property type="entry name" value="aa-tRNA-synth_II/BPL/LPL"/>
</dbReference>
<dbReference type="InterPro" id="IPR004522">
    <property type="entry name" value="Asn-tRNA-ligase"/>
</dbReference>
<dbReference type="InterPro" id="IPR002312">
    <property type="entry name" value="Asp/Asn-tRNA-synth_IIb"/>
</dbReference>
<dbReference type="InterPro" id="IPR012340">
    <property type="entry name" value="NA-bd_OB-fold"/>
</dbReference>
<dbReference type="InterPro" id="IPR004365">
    <property type="entry name" value="NA-bd_OB_tRNA"/>
</dbReference>
<dbReference type="NCBIfam" id="TIGR00457">
    <property type="entry name" value="asnS"/>
    <property type="match status" value="1"/>
</dbReference>
<dbReference type="NCBIfam" id="NF003037">
    <property type="entry name" value="PRK03932.1"/>
    <property type="match status" value="1"/>
</dbReference>
<dbReference type="PANTHER" id="PTHR22594:SF34">
    <property type="entry name" value="ASPARAGINE--TRNA LIGASE, MITOCHONDRIAL-RELATED"/>
    <property type="match status" value="1"/>
</dbReference>
<dbReference type="PANTHER" id="PTHR22594">
    <property type="entry name" value="ASPARTYL/LYSYL-TRNA SYNTHETASE"/>
    <property type="match status" value="1"/>
</dbReference>
<dbReference type="Pfam" id="PF00152">
    <property type="entry name" value="tRNA-synt_2"/>
    <property type="match status" value="1"/>
</dbReference>
<dbReference type="Pfam" id="PF01336">
    <property type="entry name" value="tRNA_anti-codon"/>
    <property type="match status" value="1"/>
</dbReference>
<dbReference type="PRINTS" id="PR01042">
    <property type="entry name" value="TRNASYNTHASP"/>
</dbReference>
<dbReference type="SUPFAM" id="SSF55681">
    <property type="entry name" value="Class II aaRS and biotin synthetases"/>
    <property type="match status" value="1"/>
</dbReference>
<dbReference type="SUPFAM" id="SSF50249">
    <property type="entry name" value="Nucleic acid-binding proteins"/>
    <property type="match status" value="1"/>
</dbReference>
<dbReference type="PROSITE" id="PS50862">
    <property type="entry name" value="AA_TRNA_LIGASE_II"/>
    <property type="match status" value="1"/>
</dbReference>